<keyword id="KW-0106">Calcium</keyword>
<keyword id="KW-1003">Cell membrane</keyword>
<keyword id="KW-0217">Developmental protein</keyword>
<keyword id="KW-1015">Disulfide bond</keyword>
<keyword id="KW-0297">G-protein coupled receptor</keyword>
<keyword id="KW-0325">Glycoprotein</keyword>
<keyword id="KW-0472">Membrane</keyword>
<keyword id="KW-0479">Metal-binding</keyword>
<keyword id="KW-0675">Receptor</keyword>
<keyword id="KW-1185">Reference proteome</keyword>
<keyword id="KW-0732">Signal</keyword>
<keyword id="KW-0807">Transducer</keyword>
<keyword id="KW-0812">Transmembrane</keyword>
<keyword id="KW-1133">Transmembrane helix</keyword>
<keyword id="KW-0879">Wnt signaling pathway</keyword>
<gene>
    <name type="primary">fzd10-b</name>
    <name type="synonym">fz10b</name>
    <name type="synonym">fz9</name>
</gene>
<evidence type="ECO:0000250" key="1"/>
<evidence type="ECO:0000255" key="2"/>
<evidence type="ECO:0000255" key="3">
    <source>
        <dbReference type="PROSITE-ProRule" id="PRU00090"/>
    </source>
</evidence>
<evidence type="ECO:0000256" key="4">
    <source>
        <dbReference type="SAM" id="MobiDB-lite"/>
    </source>
</evidence>
<evidence type="ECO:0000305" key="5"/>
<organism>
    <name type="scientific">Xenopus laevis</name>
    <name type="common">African clawed frog</name>
    <dbReference type="NCBI Taxonomy" id="8355"/>
    <lineage>
        <taxon>Eukaryota</taxon>
        <taxon>Metazoa</taxon>
        <taxon>Chordata</taxon>
        <taxon>Craniata</taxon>
        <taxon>Vertebrata</taxon>
        <taxon>Euteleostomi</taxon>
        <taxon>Amphibia</taxon>
        <taxon>Batrachia</taxon>
        <taxon>Anura</taxon>
        <taxon>Pipoidea</taxon>
        <taxon>Pipidae</taxon>
        <taxon>Xenopodinae</taxon>
        <taxon>Xenopus</taxon>
        <taxon>Xenopus</taxon>
    </lineage>
</organism>
<protein>
    <recommendedName>
        <fullName>Frizzled-10-B</fullName>
        <shortName>Fz-10B</shortName>
        <shortName>Xfz10-B</shortName>
    </recommendedName>
    <alternativeName>
        <fullName>Frizzled-9</fullName>
        <shortName>Fz-9</shortName>
        <shortName>Xfz9</shortName>
    </alternativeName>
</protein>
<accession>Q9W742</accession>
<feature type="signal peptide" evidence="2">
    <location>
        <begin position="1"/>
        <end position="20"/>
    </location>
</feature>
<feature type="chain" id="PRO_0000013009" description="Frizzled-10-B">
    <location>
        <begin position="21"/>
        <end position="580"/>
    </location>
</feature>
<feature type="topological domain" description="Extracellular" evidence="2">
    <location>
        <begin position="21"/>
        <end position="224"/>
    </location>
</feature>
<feature type="transmembrane region" description="Helical; Name=1" evidence="2">
    <location>
        <begin position="225"/>
        <end position="245"/>
    </location>
</feature>
<feature type="topological domain" description="Cytoplasmic" evidence="2">
    <location>
        <begin position="246"/>
        <end position="261"/>
    </location>
</feature>
<feature type="transmembrane region" description="Helical; Name=2" evidence="2">
    <location>
        <begin position="262"/>
        <end position="282"/>
    </location>
</feature>
<feature type="topological domain" description="Extracellular" evidence="2">
    <location>
        <begin position="283"/>
        <end position="309"/>
    </location>
</feature>
<feature type="transmembrane region" description="Helical; Name=3" evidence="2">
    <location>
        <begin position="310"/>
        <end position="330"/>
    </location>
</feature>
<feature type="topological domain" description="Cytoplasmic" evidence="2">
    <location>
        <begin position="331"/>
        <end position="350"/>
    </location>
</feature>
<feature type="transmembrane region" description="Helical; Name=4" evidence="2">
    <location>
        <begin position="351"/>
        <end position="371"/>
    </location>
</feature>
<feature type="topological domain" description="Extracellular" evidence="2">
    <location>
        <begin position="372"/>
        <end position="392"/>
    </location>
</feature>
<feature type="transmembrane region" description="Helical; Name=5" evidence="2">
    <location>
        <begin position="393"/>
        <end position="413"/>
    </location>
</feature>
<feature type="topological domain" description="Cytoplasmic" evidence="2">
    <location>
        <begin position="414"/>
        <end position="442"/>
    </location>
</feature>
<feature type="transmembrane region" description="Helical; Name=6" evidence="2">
    <location>
        <begin position="443"/>
        <end position="463"/>
    </location>
</feature>
<feature type="topological domain" description="Extracellular" evidence="2">
    <location>
        <begin position="464"/>
        <end position="501"/>
    </location>
</feature>
<feature type="transmembrane region" description="Helical; Name=7" evidence="2">
    <location>
        <begin position="502"/>
        <end position="522"/>
    </location>
</feature>
<feature type="topological domain" description="Cytoplasmic" evidence="2">
    <location>
        <begin position="523"/>
        <end position="580"/>
    </location>
</feature>
<feature type="domain" description="FZ" evidence="3">
    <location>
        <begin position="29"/>
        <end position="150"/>
    </location>
</feature>
<feature type="region of interest" description="Disordered" evidence="4">
    <location>
        <begin position="173"/>
        <end position="194"/>
    </location>
</feature>
<feature type="region of interest" description="Disordered" evidence="4">
    <location>
        <begin position="558"/>
        <end position="580"/>
    </location>
</feature>
<feature type="short sequence motif" description="Lys-Thr-X-X-X-Trp motif, mediates interaction with the PDZ domain of Dvl family members" evidence="1">
    <location>
        <begin position="525"/>
        <end position="530"/>
    </location>
</feature>
<feature type="short sequence motif" description="PDZ-binding">
    <location>
        <begin position="578"/>
        <end position="580"/>
    </location>
</feature>
<feature type="compositionally biased region" description="Basic and acidic residues" evidence="4">
    <location>
        <begin position="180"/>
        <end position="189"/>
    </location>
</feature>
<feature type="glycosylation site" description="N-linked (GlcNAc...) asparagine" evidence="2">
    <location>
        <position position="48"/>
    </location>
</feature>
<feature type="glycosylation site" description="N-linked (GlcNAc...) asparagine" evidence="2">
    <location>
        <position position="153"/>
    </location>
</feature>
<feature type="disulfide bond" evidence="3">
    <location>
        <begin position="34"/>
        <end position="95"/>
    </location>
</feature>
<feature type="disulfide bond" evidence="3">
    <location>
        <begin position="42"/>
        <end position="88"/>
    </location>
</feature>
<feature type="disulfide bond" evidence="3">
    <location>
        <begin position="79"/>
        <end position="117"/>
    </location>
</feature>
<feature type="disulfide bond" evidence="3">
    <location>
        <begin position="106"/>
        <end position="147"/>
    </location>
</feature>
<feature type="disulfide bond" evidence="3">
    <location>
        <begin position="110"/>
        <end position="134"/>
    </location>
</feature>
<name>FZ10B_XENLA</name>
<comment type="function">
    <text>Receptor for Wnt proteins. Most of frizzled receptors are coupled to the beta-catenin canonical signaling pathway, which leads to the activation of disheveled proteins, inhibition of GSK-3 kinase, nuclear accumulation of beta-catenin and activation of Wnt target genes. A second signaling pathway involving PKC and calcium fluxes has been seen for some family members, but it is not yet clear if it represents a distinct pathway or if it can be integrated in the canonical pathway, as PKC seems to be required for Wnt-mediated inactivation of GSK-3 kinase. Both pathways seem to involve interactions with G-proteins. May be involved in transduction and intercellular transmission of polarity information during tissue morphogenesis and/or in differentiated tissues. Activated by Wnt8. Could have an antagonizing activity in the morphogenesis during development.</text>
</comment>
<comment type="subcellular location">
    <subcellularLocation>
        <location evidence="5">Cell membrane</location>
        <topology evidence="5">Multi-pass membrane protein</topology>
    </subcellularLocation>
</comment>
<comment type="tissue specificity">
    <text>Expressed in liver, lung, brain, testis, heart and ovary.</text>
</comment>
<comment type="developmental stage">
    <text>Expressed from blastula stage, peak expression at late gastrula stage. Expression localizes in neural fold at neurula stage; in the dorsal region of midbrain, hindbrain and spinal cord at tadpole stage.</text>
</comment>
<comment type="domain">
    <text evidence="1">Lys-Thr-X-X-X-Trp motif interacts with the PDZ domain of Dvl (Disheveled) family members and is involved in the activation of the Wnt/beta-catenin signaling pathway.</text>
</comment>
<comment type="domain">
    <text evidence="1">The FZ domain is involved in binding with Wnt ligands.</text>
</comment>
<comment type="similarity">
    <text evidence="5">Belongs to the G-protein coupled receptor Fz/Smo family.</text>
</comment>
<sequence length="580" mass="65106">MEPRVVTALLLSLAAALCSGISSINPDRSGEGRCQAIEIPMCKDIGYNMTRMPNLMGHENQKEAAIQLHEFAPLVEYGCHSHLKFFLCSLYAPMCTEQVSTPIPACRVMCEQARLKCSPIMEQFNFKWPDSLDCSKLPNKNDPNYLCMEAPNNGTDEAPRSSSILPPIFRPQRPNSGHEMYPKDPKGRSSCENSGKFHHVEKSASCAPLCSSSVDVYWSKNDKKFAFIWIAIWSLLCFFSSAFTVLTFLVDPLRFKYPERPIIFLSMCYCVYSVGYIIRLFAGADSIACDRDSGQLYVIQEGLESTGCTIVFLILYYFGMASSLWWVILTLTWFLAAGKKWGHEAIEANSSYFHLAAWAIPAVKTIMILVMRRVAGDELTGVCYVGSMDVNALTGFVLIPLACYLIIGTSFILSGFVALFHIRRVMKTGGENTDKLEKLMVRIGVFSVLYTVPATCVIACYFYERLNMDFWKILATQDKCKMDSQTKTLDCTMTSSIPAVEIFMVKIFMLLVVGITSGMWIWTSKTVQSWQNVFSKSLKKRNRNKPASVITSAGIYKKPQQPPKIHHGKYESALRSPTCV</sequence>
<proteinExistence type="evidence at transcript level"/>
<reference key="1">
    <citation type="journal article" date="1999" name="Mech. Dev.">
        <title>Two novel Xenopus frizzled genes expressed in developing heart and brain.</title>
        <authorList>
            <person name="Wheeler G.N."/>
            <person name="Hoppler S."/>
        </authorList>
    </citation>
    <scope>NUCLEOTIDE SEQUENCE [MRNA]</scope>
</reference>
<reference key="2">
    <citation type="journal article" date="2000" name="Biochem. Biophys. Res. Commun.">
        <title>Isolation of Xenopus frizzled-10A and frizzled-10B genomic clones and their expression in adult tissues and embryos.</title>
        <authorList>
            <person name="Moriwaki J."/>
            <person name="Kajita E."/>
            <person name="Kirikoshi H."/>
            <person name="Koike J."/>
            <person name="Sagara N."/>
            <person name="Yasuhiko Y."/>
            <person name="Saitoh T."/>
            <person name="Hirai M."/>
            <person name="Katoh M."/>
            <person name="Shiokawa K."/>
        </authorList>
    </citation>
    <scope>NUCLEOTIDE SEQUENCE [MRNA]</scope>
    <source>
        <tissue>Liver</tissue>
    </source>
</reference>
<dbReference type="EMBL" id="AF159107">
    <property type="protein sequence ID" value="AAD44332.1"/>
    <property type="molecule type" value="mRNA"/>
</dbReference>
<dbReference type="EMBL" id="AB046535">
    <property type="protein sequence ID" value="BAB19018.1"/>
    <property type="molecule type" value="mRNA"/>
</dbReference>
<dbReference type="SMR" id="Q9W742"/>
<dbReference type="GlyCosmos" id="Q9W742">
    <property type="glycosylation" value="2 sites, No reported glycans"/>
</dbReference>
<dbReference type="DNASU" id="387605"/>
<dbReference type="GeneID" id="387605"/>
<dbReference type="KEGG" id="xla:387605"/>
<dbReference type="CTD" id="387605"/>
<dbReference type="OMA" id="CMAGFCS"/>
<dbReference type="OrthoDB" id="5959102at2759"/>
<dbReference type="Proteomes" id="UP000186698">
    <property type="component" value="Chromosome 1S"/>
</dbReference>
<dbReference type="Bgee" id="387605">
    <property type="expression patterns" value="Expressed in pancreas and 16 other cell types or tissues"/>
</dbReference>
<dbReference type="GO" id="GO:0005615">
    <property type="term" value="C:extracellular space"/>
    <property type="evidence" value="ECO:0000318"/>
    <property type="project" value="GO_Central"/>
</dbReference>
<dbReference type="GO" id="GO:0005886">
    <property type="term" value="C:plasma membrane"/>
    <property type="evidence" value="ECO:0007669"/>
    <property type="project" value="UniProtKB-SubCell"/>
</dbReference>
<dbReference type="GO" id="GO:0004930">
    <property type="term" value="F:G protein-coupled receptor activity"/>
    <property type="evidence" value="ECO:0007669"/>
    <property type="project" value="UniProtKB-KW"/>
</dbReference>
<dbReference type="GO" id="GO:0046872">
    <property type="term" value="F:metal ion binding"/>
    <property type="evidence" value="ECO:0007669"/>
    <property type="project" value="UniProtKB-KW"/>
</dbReference>
<dbReference type="GO" id="GO:0017147">
    <property type="term" value="F:Wnt-protein binding"/>
    <property type="evidence" value="ECO:0000318"/>
    <property type="project" value="GO_Central"/>
</dbReference>
<dbReference type="GO" id="GO:0060070">
    <property type="term" value="P:canonical Wnt signaling pathway"/>
    <property type="evidence" value="ECO:0000318"/>
    <property type="project" value="GO_Central"/>
</dbReference>
<dbReference type="GO" id="GO:0035567">
    <property type="term" value="P:non-canonical Wnt signaling pathway"/>
    <property type="evidence" value="ECO:0000318"/>
    <property type="project" value="GO_Central"/>
</dbReference>
<dbReference type="CDD" id="cd15037">
    <property type="entry name" value="7tmF_FZD10"/>
    <property type="match status" value="1"/>
</dbReference>
<dbReference type="CDD" id="cd07462">
    <property type="entry name" value="CRD_FZ10"/>
    <property type="match status" value="1"/>
</dbReference>
<dbReference type="FunFam" id="1.10.2000.10:FF:000007">
    <property type="entry name" value="Frizzled class receptor 10"/>
    <property type="match status" value="1"/>
</dbReference>
<dbReference type="FunFam" id="1.20.1070.10:FF:000020">
    <property type="entry name" value="Frizzled class receptor 10"/>
    <property type="match status" value="1"/>
</dbReference>
<dbReference type="Gene3D" id="1.10.2000.10">
    <property type="entry name" value="Frizzled cysteine-rich domain"/>
    <property type="match status" value="1"/>
</dbReference>
<dbReference type="Gene3D" id="1.20.1070.10">
    <property type="entry name" value="Rhodopsin 7-helix transmembrane proteins"/>
    <property type="match status" value="1"/>
</dbReference>
<dbReference type="InterPro" id="IPR015526">
    <property type="entry name" value="Frizzled/SFRP"/>
</dbReference>
<dbReference type="InterPro" id="IPR000539">
    <property type="entry name" value="Frizzled/Smoothened_7TM"/>
</dbReference>
<dbReference type="InterPro" id="IPR020067">
    <property type="entry name" value="Frizzled_dom"/>
</dbReference>
<dbReference type="InterPro" id="IPR036790">
    <property type="entry name" value="Frizzled_dom_sf"/>
</dbReference>
<dbReference type="InterPro" id="IPR017981">
    <property type="entry name" value="GPCR_2-like_7TM"/>
</dbReference>
<dbReference type="PANTHER" id="PTHR11309">
    <property type="entry name" value="FRIZZLED"/>
    <property type="match status" value="1"/>
</dbReference>
<dbReference type="PANTHER" id="PTHR11309:SF86">
    <property type="entry name" value="FRIZZLED-10"/>
    <property type="match status" value="1"/>
</dbReference>
<dbReference type="Pfam" id="PF01534">
    <property type="entry name" value="Frizzled"/>
    <property type="match status" value="1"/>
</dbReference>
<dbReference type="Pfam" id="PF01392">
    <property type="entry name" value="Fz"/>
    <property type="match status" value="1"/>
</dbReference>
<dbReference type="PRINTS" id="PR00489">
    <property type="entry name" value="FRIZZLED"/>
</dbReference>
<dbReference type="SMART" id="SM00063">
    <property type="entry name" value="FRI"/>
    <property type="match status" value="1"/>
</dbReference>
<dbReference type="SMART" id="SM01330">
    <property type="entry name" value="Frizzled"/>
    <property type="match status" value="1"/>
</dbReference>
<dbReference type="SUPFAM" id="SSF63501">
    <property type="entry name" value="Frizzled cysteine-rich domain"/>
    <property type="match status" value="1"/>
</dbReference>
<dbReference type="PROSITE" id="PS50038">
    <property type="entry name" value="FZ"/>
    <property type="match status" value="1"/>
</dbReference>
<dbReference type="PROSITE" id="PS50261">
    <property type="entry name" value="G_PROTEIN_RECEP_F2_4"/>
    <property type="match status" value="1"/>
</dbReference>